<reference key="1">
    <citation type="journal article" date="2003" name="Nucleic Acids Res.">
        <title>Genome sequence of Chlamydophila caviae (Chlamydia psittaci GPIC): examining the role of niche-specific genes in the evolution of the Chlamydiaceae.</title>
        <authorList>
            <person name="Read T.D."/>
            <person name="Myers G.S.A."/>
            <person name="Brunham R.C."/>
            <person name="Nelson W.C."/>
            <person name="Paulsen I.T."/>
            <person name="Heidelberg J.F."/>
            <person name="Holtzapple E.K."/>
            <person name="Khouri H.M."/>
            <person name="Federova N.B."/>
            <person name="Carty H.A."/>
            <person name="Umayam L.A."/>
            <person name="Haft D.H."/>
            <person name="Peterson J.D."/>
            <person name="Beanan M.J."/>
            <person name="White O."/>
            <person name="Salzberg S.L."/>
            <person name="Hsia R.-C."/>
            <person name="McClarty G."/>
            <person name="Rank R.G."/>
            <person name="Bavoil P.M."/>
            <person name="Fraser C.M."/>
        </authorList>
    </citation>
    <scope>NUCLEOTIDE SEQUENCE [LARGE SCALE GENOMIC DNA]</scope>
    <source>
        <strain>ATCC VR-813 / DSM 19441 / 03DC25 / GPIC</strain>
    </source>
</reference>
<organism>
    <name type="scientific">Chlamydia caviae (strain ATCC VR-813 / DSM 19441 / 03DC25 / GPIC)</name>
    <name type="common">Chlamydophila caviae</name>
    <dbReference type="NCBI Taxonomy" id="227941"/>
    <lineage>
        <taxon>Bacteria</taxon>
        <taxon>Pseudomonadati</taxon>
        <taxon>Chlamydiota</taxon>
        <taxon>Chlamydiia</taxon>
        <taxon>Chlamydiales</taxon>
        <taxon>Chlamydiaceae</taxon>
        <taxon>Chlamydia/Chlamydophila group</taxon>
        <taxon>Chlamydia</taxon>
    </lineage>
</organism>
<gene>
    <name evidence="1" type="primary">aroA</name>
    <name type="ordered locus">CCA_00723</name>
</gene>
<dbReference type="EC" id="2.5.1.19" evidence="1"/>
<dbReference type="EMBL" id="AE015925">
    <property type="protein sequence ID" value="AAP05464.1"/>
    <property type="molecule type" value="Genomic_DNA"/>
</dbReference>
<dbReference type="RefSeq" id="WP_011006678.1">
    <property type="nucleotide sequence ID" value="NC_003361.3"/>
</dbReference>
<dbReference type="SMR" id="Q822G0"/>
<dbReference type="STRING" id="227941.CCA_00723"/>
<dbReference type="KEGG" id="cca:CCA_00723"/>
<dbReference type="eggNOG" id="COG0128">
    <property type="taxonomic scope" value="Bacteria"/>
</dbReference>
<dbReference type="HOGENOM" id="CLU_024321_0_0_0"/>
<dbReference type="OrthoDB" id="9809920at2"/>
<dbReference type="UniPathway" id="UPA00053">
    <property type="reaction ID" value="UER00089"/>
</dbReference>
<dbReference type="Proteomes" id="UP000002193">
    <property type="component" value="Chromosome"/>
</dbReference>
<dbReference type="GO" id="GO:0005737">
    <property type="term" value="C:cytoplasm"/>
    <property type="evidence" value="ECO:0007669"/>
    <property type="project" value="UniProtKB-SubCell"/>
</dbReference>
<dbReference type="GO" id="GO:0003866">
    <property type="term" value="F:3-phosphoshikimate 1-carboxyvinyltransferase activity"/>
    <property type="evidence" value="ECO:0007669"/>
    <property type="project" value="UniProtKB-UniRule"/>
</dbReference>
<dbReference type="GO" id="GO:0008652">
    <property type="term" value="P:amino acid biosynthetic process"/>
    <property type="evidence" value="ECO:0007669"/>
    <property type="project" value="UniProtKB-KW"/>
</dbReference>
<dbReference type="GO" id="GO:0009073">
    <property type="term" value="P:aromatic amino acid family biosynthetic process"/>
    <property type="evidence" value="ECO:0007669"/>
    <property type="project" value="UniProtKB-KW"/>
</dbReference>
<dbReference type="GO" id="GO:0009423">
    <property type="term" value="P:chorismate biosynthetic process"/>
    <property type="evidence" value="ECO:0007669"/>
    <property type="project" value="UniProtKB-UniRule"/>
</dbReference>
<dbReference type="CDD" id="cd01556">
    <property type="entry name" value="EPSP_synthase"/>
    <property type="match status" value="1"/>
</dbReference>
<dbReference type="Gene3D" id="3.65.10.10">
    <property type="entry name" value="Enolpyruvate transferase domain"/>
    <property type="match status" value="2"/>
</dbReference>
<dbReference type="HAMAP" id="MF_00210">
    <property type="entry name" value="EPSP_synth"/>
    <property type="match status" value="1"/>
</dbReference>
<dbReference type="InterPro" id="IPR001986">
    <property type="entry name" value="Enolpyruvate_Tfrase_dom"/>
</dbReference>
<dbReference type="InterPro" id="IPR036968">
    <property type="entry name" value="Enolpyruvate_Tfrase_sf"/>
</dbReference>
<dbReference type="InterPro" id="IPR006264">
    <property type="entry name" value="EPSP_synthase"/>
</dbReference>
<dbReference type="InterPro" id="IPR023193">
    <property type="entry name" value="EPSP_synthase_CS"/>
</dbReference>
<dbReference type="InterPro" id="IPR013792">
    <property type="entry name" value="RNA3'P_cycl/enolpyr_Trfase_a/b"/>
</dbReference>
<dbReference type="NCBIfam" id="TIGR01356">
    <property type="entry name" value="aroA"/>
    <property type="match status" value="1"/>
</dbReference>
<dbReference type="PANTHER" id="PTHR21090">
    <property type="entry name" value="AROM/DEHYDROQUINATE SYNTHASE"/>
    <property type="match status" value="1"/>
</dbReference>
<dbReference type="PANTHER" id="PTHR21090:SF5">
    <property type="entry name" value="PENTAFUNCTIONAL AROM POLYPEPTIDE"/>
    <property type="match status" value="1"/>
</dbReference>
<dbReference type="Pfam" id="PF00275">
    <property type="entry name" value="EPSP_synthase"/>
    <property type="match status" value="1"/>
</dbReference>
<dbReference type="PIRSF" id="PIRSF000505">
    <property type="entry name" value="EPSPS"/>
    <property type="match status" value="1"/>
</dbReference>
<dbReference type="SUPFAM" id="SSF55205">
    <property type="entry name" value="EPT/RTPC-like"/>
    <property type="match status" value="1"/>
</dbReference>
<dbReference type="PROSITE" id="PS00885">
    <property type="entry name" value="EPSP_SYNTHASE_2"/>
    <property type="match status" value="1"/>
</dbReference>
<name>AROA_CHLCV</name>
<protein>
    <recommendedName>
        <fullName evidence="1">3-phosphoshikimate 1-carboxyvinyltransferase</fullName>
        <ecNumber evidence="1">2.5.1.19</ecNumber>
    </recommendedName>
    <alternativeName>
        <fullName evidence="1">5-enolpyruvylshikimate-3-phosphate synthase</fullName>
        <shortName evidence="1">EPSP synthase</shortName>
        <shortName evidence="1">EPSPS</shortName>
    </alternativeName>
</protein>
<feature type="chain" id="PRO_0000088242" description="3-phosphoshikimate 1-carboxyvinyltransferase">
    <location>
        <begin position="1"/>
        <end position="446"/>
    </location>
</feature>
<feature type="active site" description="Proton acceptor" evidence="1">
    <location>
        <position position="308"/>
    </location>
</feature>
<feature type="binding site" evidence="1">
    <location>
        <position position="21"/>
    </location>
    <ligand>
        <name>3-phosphoshikimate</name>
        <dbReference type="ChEBI" id="CHEBI:145989"/>
    </ligand>
</feature>
<feature type="binding site" evidence="1">
    <location>
        <position position="21"/>
    </location>
    <ligand>
        <name>phosphoenolpyruvate</name>
        <dbReference type="ChEBI" id="CHEBI:58702"/>
    </ligand>
</feature>
<feature type="binding site" evidence="1">
    <location>
        <position position="22"/>
    </location>
    <ligand>
        <name>3-phosphoshikimate</name>
        <dbReference type="ChEBI" id="CHEBI:145989"/>
    </ligand>
</feature>
<feature type="binding site" evidence="1">
    <location>
        <position position="26"/>
    </location>
    <ligand>
        <name>3-phosphoshikimate</name>
        <dbReference type="ChEBI" id="CHEBI:145989"/>
    </ligand>
</feature>
<feature type="binding site" evidence="1">
    <location>
        <position position="92"/>
    </location>
    <ligand>
        <name>phosphoenolpyruvate</name>
        <dbReference type="ChEBI" id="CHEBI:58702"/>
    </ligand>
</feature>
<feature type="binding site" evidence="1">
    <location>
        <position position="120"/>
    </location>
    <ligand>
        <name>phosphoenolpyruvate</name>
        <dbReference type="ChEBI" id="CHEBI:58702"/>
    </ligand>
</feature>
<feature type="binding site" evidence="1">
    <location>
        <position position="165"/>
    </location>
    <ligand>
        <name>3-phosphoshikimate</name>
        <dbReference type="ChEBI" id="CHEBI:145989"/>
    </ligand>
</feature>
<feature type="binding site" evidence="1">
    <location>
        <position position="166"/>
    </location>
    <ligand>
        <name>3-phosphoshikimate</name>
        <dbReference type="ChEBI" id="CHEBI:145989"/>
    </ligand>
</feature>
<feature type="binding site" evidence="1">
    <location>
        <position position="166"/>
    </location>
    <ligand>
        <name>phosphoenolpyruvate</name>
        <dbReference type="ChEBI" id="CHEBI:58702"/>
    </ligand>
</feature>
<feature type="binding site" evidence="1">
    <location>
        <position position="308"/>
    </location>
    <ligand>
        <name>3-phosphoshikimate</name>
        <dbReference type="ChEBI" id="CHEBI:145989"/>
    </ligand>
</feature>
<feature type="binding site" evidence="1">
    <location>
        <position position="335"/>
    </location>
    <ligand>
        <name>3-phosphoshikimate</name>
        <dbReference type="ChEBI" id="CHEBI:145989"/>
    </ligand>
</feature>
<feature type="binding site" evidence="1">
    <location>
        <position position="339"/>
    </location>
    <ligand>
        <name>phosphoenolpyruvate</name>
        <dbReference type="ChEBI" id="CHEBI:58702"/>
    </ligand>
</feature>
<feature type="binding site" evidence="1">
    <location>
        <position position="380"/>
    </location>
    <ligand>
        <name>phosphoenolpyruvate</name>
        <dbReference type="ChEBI" id="CHEBI:58702"/>
    </ligand>
</feature>
<feature type="binding site" evidence="1">
    <location>
        <position position="406"/>
    </location>
    <ligand>
        <name>phosphoenolpyruvate</name>
        <dbReference type="ChEBI" id="CHEBI:58702"/>
    </ligand>
</feature>
<keyword id="KW-0028">Amino-acid biosynthesis</keyword>
<keyword id="KW-0057">Aromatic amino acid biosynthesis</keyword>
<keyword id="KW-0963">Cytoplasm</keyword>
<keyword id="KW-0808">Transferase</keyword>
<accession>Q822G0</accession>
<proteinExistence type="inferred from homology"/>
<sequence>MLTYKISPSSISGSVDVPPSKSHTLRAIFWASLSRGTSTINNPLESPDSEAMIQACKQLGAKIYKKSSSLEITGTPHLRLPKDIAIDAGSSGIVFRFFTALAAIFSEKVTITGSSQLQRRPIAPLIRALENFGATFSYQRDPYTLPFSVLGPISSGYTEVLGEDSQYASALAMACSLAEGPFSFTIINPKERPWFKLTLWWLEQLAIPYSQSEENTYSFVGKSRPEGFSYTVGGDFSSAAFLAVAALLSQSPHPTYLRNLNMQDVQGDKELFVLLKKLGANIVFENDIVIIFPSTISGGNIDMDPFIDALPILAVLCCFATSPSHLYNARGAKDKESDRIVAITEELQKMGACIQPCHDGLLINPSPLYGASMFSHNDHRIAMALSIAAMHASGDSSISDTECVKKTFPNFIQILNSLHANIQEYHEPISMWTTGSGQDLIGSCPC</sequence>
<comment type="function">
    <text evidence="1">Catalyzes the transfer of the enolpyruvyl moiety of phosphoenolpyruvate (PEP) to the 5-hydroxyl of shikimate-3-phosphate (S3P) to produce enolpyruvyl shikimate-3-phosphate and inorganic phosphate.</text>
</comment>
<comment type="catalytic activity">
    <reaction evidence="1">
        <text>3-phosphoshikimate + phosphoenolpyruvate = 5-O-(1-carboxyvinyl)-3-phosphoshikimate + phosphate</text>
        <dbReference type="Rhea" id="RHEA:21256"/>
        <dbReference type="ChEBI" id="CHEBI:43474"/>
        <dbReference type="ChEBI" id="CHEBI:57701"/>
        <dbReference type="ChEBI" id="CHEBI:58702"/>
        <dbReference type="ChEBI" id="CHEBI:145989"/>
        <dbReference type="EC" id="2.5.1.19"/>
    </reaction>
    <physiologicalReaction direction="left-to-right" evidence="1">
        <dbReference type="Rhea" id="RHEA:21257"/>
    </physiologicalReaction>
</comment>
<comment type="pathway">
    <text evidence="1">Metabolic intermediate biosynthesis; chorismate biosynthesis; chorismate from D-erythrose 4-phosphate and phosphoenolpyruvate: step 6/7.</text>
</comment>
<comment type="subunit">
    <text evidence="1">Monomer.</text>
</comment>
<comment type="subcellular location">
    <subcellularLocation>
        <location evidence="1">Cytoplasm</location>
    </subcellularLocation>
</comment>
<comment type="similarity">
    <text evidence="1">Belongs to the EPSP synthase family.</text>
</comment>
<evidence type="ECO:0000255" key="1">
    <source>
        <dbReference type="HAMAP-Rule" id="MF_00210"/>
    </source>
</evidence>